<proteinExistence type="inferred from homology"/>
<evidence type="ECO:0000255" key="1">
    <source>
        <dbReference type="HAMAP-Rule" id="MF_00059"/>
    </source>
</evidence>
<reference key="1">
    <citation type="journal article" date="2004" name="Nucleic Acids Res.">
        <title>Unique features revealed by the genome sequence of Acinetobacter sp. ADP1, a versatile and naturally transformation competent bacterium.</title>
        <authorList>
            <person name="Barbe V."/>
            <person name="Vallenet D."/>
            <person name="Fonknechten N."/>
            <person name="Kreimeyer A."/>
            <person name="Oztas S."/>
            <person name="Labarre L."/>
            <person name="Cruveiller S."/>
            <person name="Robert C."/>
            <person name="Duprat S."/>
            <person name="Wincker P."/>
            <person name="Ornston L.N."/>
            <person name="Weissenbach J."/>
            <person name="Marliere P."/>
            <person name="Cohen G.N."/>
            <person name="Medigue C."/>
        </authorList>
    </citation>
    <scope>NUCLEOTIDE SEQUENCE [LARGE SCALE GENOMIC DNA]</scope>
    <source>
        <strain>ATCC 33305 / BD413 / ADP1</strain>
    </source>
</reference>
<comment type="function">
    <text evidence="1">DNA-dependent RNA polymerase catalyzes the transcription of DNA into RNA using the four ribonucleoside triphosphates as substrates.</text>
</comment>
<comment type="catalytic activity">
    <reaction evidence="1">
        <text>RNA(n) + a ribonucleoside 5'-triphosphate = RNA(n+1) + diphosphate</text>
        <dbReference type="Rhea" id="RHEA:21248"/>
        <dbReference type="Rhea" id="RHEA-COMP:14527"/>
        <dbReference type="Rhea" id="RHEA-COMP:17342"/>
        <dbReference type="ChEBI" id="CHEBI:33019"/>
        <dbReference type="ChEBI" id="CHEBI:61557"/>
        <dbReference type="ChEBI" id="CHEBI:140395"/>
        <dbReference type="EC" id="2.7.7.6"/>
    </reaction>
</comment>
<comment type="subunit">
    <text evidence="1">Homodimer. The RNAP catalytic core consists of 2 alpha, 1 beta, 1 beta' and 1 omega subunit. When a sigma factor is associated with the core the holoenzyme is formed, which can initiate transcription.</text>
</comment>
<comment type="domain">
    <text evidence="1">The N-terminal domain is essential for RNAP assembly and basal transcription, whereas the C-terminal domain is involved in interaction with transcriptional regulators and with upstream promoter elements.</text>
</comment>
<comment type="similarity">
    <text evidence="1">Belongs to the RNA polymerase alpha chain family.</text>
</comment>
<protein>
    <recommendedName>
        <fullName evidence="1">DNA-directed RNA polymerase subunit alpha</fullName>
        <shortName evidence="1">RNAP subunit alpha</shortName>
        <ecNumber evidence="1">2.7.7.6</ecNumber>
    </recommendedName>
    <alternativeName>
        <fullName evidence="1">RNA polymerase subunit alpha</fullName>
    </alternativeName>
    <alternativeName>
        <fullName evidence="1">Transcriptase subunit alpha</fullName>
    </alternativeName>
</protein>
<keyword id="KW-0240">DNA-directed RNA polymerase</keyword>
<keyword id="KW-0548">Nucleotidyltransferase</keyword>
<keyword id="KW-0804">Transcription</keyword>
<keyword id="KW-0808">Transferase</keyword>
<accession>Q6F7T7</accession>
<sequence>MTRTANEFLTPQAIKVEAVSGTSAKVILEPLERGFGHTLGNALRRILLSSLPGAAVVEVEIEGVEHEYSTLEGLQQDIVELLLNLKGLSIKLFDQNEAYLTLEKQGPGDITAADLRLPHNVEVVNPEHLIGTLSASGSIKMRLKVSQGRGYETSDSRFPEGETRPVGRLQLDASYSPIKRVSYTVENARVEQRTDLDKLVIDLETNGTVDPEEAIRKAATILQQQIAIFVDLQKDQAPVAQEPREEVDPILLRPVDDLELTVRSANCLKAENIYYIGDLVQRTEVELLKTPNLGKKSLTEIKDVLASKGLQLGMRLENWPPASLRMDDRFAYRSR</sequence>
<dbReference type="EC" id="2.7.7.6" evidence="1"/>
<dbReference type="EMBL" id="CR543861">
    <property type="protein sequence ID" value="CAG69878.1"/>
    <property type="molecule type" value="Genomic_DNA"/>
</dbReference>
<dbReference type="RefSeq" id="WP_004924164.1">
    <property type="nucleotide sequence ID" value="NC_005966.1"/>
</dbReference>
<dbReference type="SMR" id="Q6F7T7"/>
<dbReference type="STRING" id="202950.GCA_001485005_02961"/>
<dbReference type="KEGG" id="aci:ACIAD3194"/>
<dbReference type="eggNOG" id="COG0202">
    <property type="taxonomic scope" value="Bacteria"/>
</dbReference>
<dbReference type="HOGENOM" id="CLU_053084_0_0_6"/>
<dbReference type="OrthoDB" id="9805706at2"/>
<dbReference type="BioCyc" id="ASP62977:ACIAD_RS14470-MONOMER"/>
<dbReference type="Proteomes" id="UP000000430">
    <property type="component" value="Chromosome"/>
</dbReference>
<dbReference type="GO" id="GO:0005737">
    <property type="term" value="C:cytoplasm"/>
    <property type="evidence" value="ECO:0007669"/>
    <property type="project" value="UniProtKB-ARBA"/>
</dbReference>
<dbReference type="GO" id="GO:0000428">
    <property type="term" value="C:DNA-directed RNA polymerase complex"/>
    <property type="evidence" value="ECO:0007669"/>
    <property type="project" value="UniProtKB-KW"/>
</dbReference>
<dbReference type="GO" id="GO:0003677">
    <property type="term" value="F:DNA binding"/>
    <property type="evidence" value="ECO:0007669"/>
    <property type="project" value="UniProtKB-UniRule"/>
</dbReference>
<dbReference type="GO" id="GO:0003899">
    <property type="term" value="F:DNA-directed RNA polymerase activity"/>
    <property type="evidence" value="ECO:0007669"/>
    <property type="project" value="UniProtKB-UniRule"/>
</dbReference>
<dbReference type="GO" id="GO:0046983">
    <property type="term" value="F:protein dimerization activity"/>
    <property type="evidence" value="ECO:0007669"/>
    <property type="project" value="InterPro"/>
</dbReference>
<dbReference type="GO" id="GO:0006351">
    <property type="term" value="P:DNA-templated transcription"/>
    <property type="evidence" value="ECO:0007669"/>
    <property type="project" value="UniProtKB-UniRule"/>
</dbReference>
<dbReference type="CDD" id="cd06928">
    <property type="entry name" value="RNAP_alpha_NTD"/>
    <property type="match status" value="1"/>
</dbReference>
<dbReference type="FunFam" id="1.10.150.20:FF:000001">
    <property type="entry name" value="DNA-directed RNA polymerase subunit alpha"/>
    <property type="match status" value="1"/>
</dbReference>
<dbReference type="FunFam" id="2.170.120.12:FF:000001">
    <property type="entry name" value="DNA-directed RNA polymerase subunit alpha"/>
    <property type="match status" value="1"/>
</dbReference>
<dbReference type="Gene3D" id="1.10.150.20">
    <property type="entry name" value="5' to 3' exonuclease, C-terminal subdomain"/>
    <property type="match status" value="1"/>
</dbReference>
<dbReference type="Gene3D" id="2.170.120.12">
    <property type="entry name" value="DNA-directed RNA polymerase, insert domain"/>
    <property type="match status" value="1"/>
</dbReference>
<dbReference type="Gene3D" id="3.30.1360.10">
    <property type="entry name" value="RNA polymerase, RBP11-like subunit"/>
    <property type="match status" value="1"/>
</dbReference>
<dbReference type="HAMAP" id="MF_00059">
    <property type="entry name" value="RNApol_bact_RpoA"/>
    <property type="match status" value="1"/>
</dbReference>
<dbReference type="InterPro" id="IPR011262">
    <property type="entry name" value="DNA-dir_RNA_pol_insert"/>
</dbReference>
<dbReference type="InterPro" id="IPR011263">
    <property type="entry name" value="DNA-dir_RNA_pol_RpoA/D/Rpb3"/>
</dbReference>
<dbReference type="InterPro" id="IPR011773">
    <property type="entry name" value="DNA-dir_RpoA"/>
</dbReference>
<dbReference type="InterPro" id="IPR036603">
    <property type="entry name" value="RBP11-like"/>
</dbReference>
<dbReference type="InterPro" id="IPR011260">
    <property type="entry name" value="RNAP_asu_C"/>
</dbReference>
<dbReference type="InterPro" id="IPR036643">
    <property type="entry name" value="RNApol_insert_sf"/>
</dbReference>
<dbReference type="NCBIfam" id="NF003513">
    <property type="entry name" value="PRK05182.1-2"/>
    <property type="match status" value="1"/>
</dbReference>
<dbReference type="NCBIfam" id="NF003519">
    <property type="entry name" value="PRK05182.2-5"/>
    <property type="match status" value="1"/>
</dbReference>
<dbReference type="NCBIfam" id="TIGR02027">
    <property type="entry name" value="rpoA"/>
    <property type="match status" value="1"/>
</dbReference>
<dbReference type="Pfam" id="PF01000">
    <property type="entry name" value="RNA_pol_A_bac"/>
    <property type="match status" value="1"/>
</dbReference>
<dbReference type="Pfam" id="PF03118">
    <property type="entry name" value="RNA_pol_A_CTD"/>
    <property type="match status" value="1"/>
</dbReference>
<dbReference type="Pfam" id="PF01193">
    <property type="entry name" value="RNA_pol_L"/>
    <property type="match status" value="1"/>
</dbReference>
<dbReference type="SMART" id="SM00662">
    <property type="entry name" value="RPOLD"/>
    <property type="match status" value="1"/>
</dbReference>
<dbReference type="SUPFAM" id="SSF47789">
    <property type="entry name" value="C-terminal domain of RNA polymerase alpha subunit"/>
    <property type="match status" value="1"/>
</dbReference>
<dbReference type="SUPFAM" id="SSF56553">
    <property type="entry name" value="Insert subdomain of RNA polymerase alpha subunit"/>
    <property type="match status" value="1"/>
</dbReference>
<dbReference type="SUPFAM" id="SSF55257">
    <property type="entry name" value="RBP11-like subunits of RNA polymerase"/>
    <property type="match status" value="1"/>
</dbReference>
<gene>
    <name evidence="1" type="primary">rpoA</name>
    <name type="ordered locus">ACIAD3194</name>
</gene>
<organism>
    <name type="scientific">Acinetobacter baylyi (strain ATCC 33305 / BD413 / ADP1)</name>
    <dbReference type="NCBI Taxonomy" id="62977"/>
    <lineage>
        <taxon>Bacteria</taxon>
        <taxon>Pseudomonadati</taxon>
        <taxon>Pseudomonadota</taxon>
        <taxon>Gammaproteobacteria</taxon>
        <taxon>Moraxellales</taxon>
        <taxon>Moraxellaceae</taxon>
        <taxon>Acinetobacter</taxon>
    </lineage>
</organism>
<name>RPOA_ACIAD</name>
<feature type="chain" id="PRO_0000175252" description="DNA-directed RNA polymerase subunit alpha">
    <location>
        <begin position="1"/>
        <end position="335"/>
    </location>
</feature>
<feature type="region of interest" description="Alpha N-terminal domain (alpha-NTD)" evidence="1">
    <location>
        <begin position="1"/>
        <end position="233"/>
    </location>
</feature>
<feature type="region of interest" description="Alpha C-terminal domain (alpha-CTD)" evidence="1">
    <location>
        <begin position="247"/>
        <end position="335"/>
    </location>
</feature>